<feature type="initiator methionine" description="Removed">
    <location>
        <position position="1"/>
    </location>
</feature>
<feature type="chain" id="PRO_0000100440" description="Phosphoribosylformylglycinamidine synthase subunit PurL">
    <location>
        <begin position="2"/>
        <end position="742"/>
    </location>
</feature>
<feature type="active site" evidence="1">
    <location>
        <position position="54"/>
    </location>
</feature>
<feature type="active site" description="Proton acceptor" evidence="1">
    <location>
        <position position="100"/>
    </location>
</feature>
<feature type="binding site" evidence="1">
    <location>
        <position position="57"/>
    </location>
    <ligand>
        <name>ATP</name>
        <dbReference type="ChEBI" id="CHEBI:30616"/>
    </ligand>
</feature>
<feature type="binding site" evidence="1">
    <location>
        <position position="96"/>
    </location>
    <ligand>
        <name>ATP</name>
        <dbReference type="ChEBI" id="CHEBI:30616"/>
    </ligand>
</feature>
<feature type="binding site" evidence="1">
    <location>
        <position position="98"/>
    </location>
    <ligand>
        <name>Mg(2+)</name>
        <dbReference type="ChEBI" id="CHEBI:18420"/>
        <label>1</label>
    </ligand>
</feature>
<feature type="binding site" evidence="1">
    <location>
        <begin position="99"/>
        <end position="102"/>
    </location>
    <ligand>
        <name>substrate</name>
    </ligand>
</feature>
<feature type="binding site" evidence="1">
    <location>
        <position position="121"/>
    </location>
    <ligand>
        <name>substrate</name>
    </ligand>
</feature>
<feature type="binding site" evidence="1">
    <location>
        <position position="122"/>
    </location>
    <ligand>
        <name>Mg(2+)</name>
        <dbReference type="ChEBI" id="CHEBI:18420"/>
        <label>2</label>
    </ligand>
</feature>
<feature type="binding site" evidence="1">
    <location>
        <position position="225"/>
    </location>
    <ligand>
        <name>substrate</name>
    </ligand>
</feature>
<feature type="binding site" evidence="1">
    <location>
        <position position="245"/>
    </location>
    <ligand>
        <name>substrate</name>
    </ligand>
</feature>
<feature type="binding site" evidence="1">
    <location>
        <position position="273"/>
    </location>
    <ligand>
        <name>Mg(2+)</name>
        <dbReference type="ChEBI" id="CHEBI:18420"/>
        <label>2</label>
    </ligand>
</feature>
<feature type="binding site" evidence="1">
    <location>
        <begin position="317"/>
        <end position="319"/>
    </location>
    <ligand>
        <name>substrate</name>
    </ligand>
</feature>
<feature type="binding site" evidence="1">
    <location>
        <position position="537"/>
    </location>
    <ligand>
        <name>ATP</name>
        <dbReference type="ChEBI" id="CHEBI:30616"/>
    </ligand>
</feature>
<feature type="binding site" evidence="1">
    <location>
        <position position="538"/>
    </location>
    <ligand>
        <name>Mg(2+)</name>
        <dbReference type="ChEBI" id="CHEBI:18420"/>
        <label>1</label>
    </ligand>
</feature>
<feature type="binding site" evidence="1">
    <location>
        <position position="540"/>
    </location>
    <ligand>
        <name>substrate</name>
    </ligand>
</feature>
<feature type="sequence conflict" description="In Ref. 1; AAA22679." evidence="3" ref="1">
    <original>F</original>
    <variation>L</variation>
    <location>
        <position position="513"/>
    </location>
</feature>
<gene>
    <name evidence="1" type="primary">purL</name>
    <name type="ordered locus">BSU06480</name>
</gene>
<evidence type="ECO:0000255" key="1">
    <source>
        <dbReference type="HAMAP-Rule" id="MF_00420"/>
    </source>
</evidence>
<evidence type="ECO:0000269" key="2">
    <source>
    </source>
</evidence>
<evidence type="ECO:0000305" key="3"/>
<accession>P12042</accession>
<organism>
    <name type="scientific">Bacillus subtilis (strain 168)</name>
    <dbReference type="NCBI Taxonomy" id="224308"/>
    <lineage>
        <taxon>Bacteria</taxon>
        <taxon>Bacillati</taxon>
        <taxon>Bacillota</taxon>
        <taxon>Bacilli</taxon>
        <taxon>Bacillales</taxon>
        <taxon>Bacillaceae</taxon>
        <taxon>Bacillus</taxon>
    </lineage>
</organism>
<protein>
    <recommendedName>
        <fullName evidence="1">Phosphoribosylformylglycinamidine synthase subunit PurL</fullName>
        <shortName evidence="1">FGAM synthase</shortName>
        <ecNumber evidence="1">6.3.5.3</ecNumber>
    </recommendedName>
    <alternativeName>
        <fullName evidence="1">Formylglycinamide ribonucleotide amidotransferase subunit II</fullName>
        <shortName evidence="1">FGAR amidotransferase II</shortName>
        <shortName evidence="1">FGAR-AT II</shortName>
    </alternativeName>
    <alternativeName>
        <fullName evidence="1">Glutamine amidotransferase PurL</fullName>
    </alternativeName>
    <alternativeName>
        <fullName evidence="1">Phosphoribosylformylglycinamidine synthase subunit II</fullName>
    </alternativeName>
</protein>
<keyword id="KW-0067">ATP-binding</keyword>
<keyword id="KW-0963">Cytoplasm</keyword>
<keyword id="KW-0903">Direct protein sequencing</keyword>
<keyword id="KW-0436">Ligase</keyword>
<keyword id="KW-0460">Magnesium</keyword>
<keyword id="KW-0479">Metal-binding</keyword>
<keyword id="KW-0547">Nucleotide-binding</keyword>
<keyword id="KW-0658">Purine biosynthesis</keyword>
<keyword id="KW-1185">Reference proteome</keyword>
<comment type="function">
    <text evidence="1 2">Part of the phosphoribosylformylglycinamidine synthase complex involved in the purines biosynthetic pathway. Catalyzes the ATP-dependent conversion of formylglycinamide ribonucleotide (FGAR) and glutamine to yield formylglycinamidine ribonucleotide (FGAM) and glutamate. The FGAM synthase complex is composed of three subunits. PurQ produces an ammonia molecule by converting glutamine to glutamate. PurL transfers the ammonia molecule to FGAR to form FGAM in an ATP-dependent manner. PurS interacts with PurQ and PurL and is thought to assist in the transfer of the ammonia molecule from PurQ to PurL.</text>
</comment>
<comment type="catalytic activity">
    <reaction evidence="1 2">
        <text>N(2)-formyl-N(1)-(5-phospho-beta-D-ribosyl)glycinamide + L-glutamine + ATP + H2O = 2-formamido-N(1)-(5-O-phospho-beta-D-ribosyl)acetamidine + L-glutamate + ADP + phosphate + H(+)</text>
        <dbReference type="Rhea" id="RHEA:17129"/>
        <dbReference type="ChEBI" id="CHEBI:15377"/>
        <dbReference type="ChEBI" id="CHEBI:15378"/>
        <dbReference type="ChEBI" id="CHEBI:29985"/>
        <dbReference type="ChEBI" id="CHEBI:30616"/>
        <dbReference type="ChEBI" id="CHEBI:43474"/>
        <dbReference type="ChEBI" id="CHEBI:58359"/>
        <dbReference type="ChEBI" id="CHEBI:147286"/>
        <dbReference type="ChEBI" id="CHEBI:147287"/>
        <dbReference type="ChEBI" id="CHEBI:456216"/>
        <dbReference type="EC" id="6.3.5.3"/>
    </reaction>
</comment>
<comment type="catalytic activity">
    <reaction evidence="2">
        <text>L-glutamine + H2O = L-glutamate + NH4(+)</text>
        <dbReference type="Rhea" id="RHEA:15889"/>
        <dbReference type="ChEBI" id="CHEBI:15377"/>
        <dbReference type="ChEBI" id="CHEBI:28938"/>
        <dbReference type="ChEBI" id="CHEBI:29985"/>
        <dbReference type="ChEBI" id="CHEBI:58359"/>
    </reaction>
</comment>
<comment type="biophysicochemical properties">
    <kinetics>
        <KM evidence="2">181 uM for ATP (FGAM synthase activity at pH 7.2 and 37 degrees Celsius)</KM>
        <KM evidence="2">398 uM for ATP (Glutamine amidotransferase activity at pH 7.2 and 37 degrees Celsius)</KM>
        <KM evidence="2">507 uM for FGAR (FGAM synthase activity at pH 7.2 and 37 degrees Celsius)</KM>
        <KM evidence="2">1.3 mM for glutamine (FGAM synthase activity at pH 7.2 and 37 degrees Celsius)</KM>
        <KM evidence="2">2.5 mM for FGAR (Glutamine amidotransferase activity at pH 7.2 and 37 degrees Celsius)</KM>
        <KM evidence="2">3.5 mM for NH3 (Glutamine amidotransferase activity at pH 7.2 and 37 degrees Celsius)</KM>
        <text>kcat is 2.49 sec(-1) for FGAM synthase activity with FGAR as substrate (at pH 7.2 and 37 degrees Celsius). kcat is 0.044 sec(-1) for glutamine amidotransferase activity with NH3 as substrate (at pH 7.2 and 37 degrees Celsius).</text>
    </kinetics>
</comment>
<comment type="pathway">
    <text evidence="1">Purine metabolism; IMP biosynthesis via de novo pathway; 5-amino-1-(5-phospho-D-ribosyl)imidazole from N(2)-formyl-N(1)-(5-phospho-D-ribosyl)glycinamide: step 1/2.</text>
</comment>
<comment type="subunit">
    <text evidence="1 2">Monomer. Part of the FGAM synthase complex composed of 1 PurL, 1 PurQ and 2 PurS subunits.</text>
</comment>
<comment type="subcellular location">
    <subcellularLocation>
        <location evidence="1">Cytoplasm</location>
    </subcellularLocation>
</comment>
<comment type="similarity">
    <text evidence="1">Belongs to the FGAMS family.</text>
</comment>
<dbReference type="EC" id="6.3.5.3" evidence="1"/>
<dbReference type="EMBL" id="J02732">
    <property type="protein sequence ID" value="AAA22679.1"/>
    <property type="molecule type" value="Genomic_DNA"/>
</dbReference>
<dbReference type="EMBL" id="AL009126">
    <property type="protein sequence ID" value="CAB12468.2"/>
    <property type="molecule type" value="Genomic_DNA"/>
</dbReference>
<dbReference type="PIR" id="G29326">
    <property type="entry name" value="SYBS2G"/>
</dbReference>
<dbReference type="RefSeq" id="NP_388530.2">
    <property type="nucleotide sequence ID" value="NC_000964.3"/>
</dbReference>
<dbReference type="RefSeq" id="WP_003244429.1">
    <property type="nucleotide sequence ID" value="NZ_OZ025638.1"/>
</dbReference>
<dbReference type="SMR" id="P12042"/>
<dbReference type="FunCoup" id="P12042">
    <property type="interactions" value="610"/>
</dbReference>
<dbReference type="IntAct" id="P12042">
    <property type="interactions" value="1"/>
</dbReference>
<dbReference type="MINT" id="P12042"/>
<dbReference type="STRING" id="224308.BSU06480"/>
<dbReference type="PaxDb" id="224308-BSU06480"/>
<dbReference type="EnsemblBacteria" id="CAB12468">
    <property type="protein sequence ID" value="CAB12468"/>
    <property type="gene ID" value="BSU_06480"/>
</dbReference>
<dbReference type="GeneID" id="939233"/>
<dbReference type="KEGG" id="bsu:BSU06480"/>
<dbReference type="PATRIC" id="fig|224308.179.peg.704"/>
<dbReference type="eggNOG" id="COG0046">
    <property type="taxonomic scope" value="Bacteria"/>
</dbReference>
<dbReference type="InParanoid" id="P12042"/>
<dbReference type="OrthoDB" id="9804441at2"/>
<dbReference type="PhylomeDB" id="P12042"/>
<dbReference type="BioCyc" id="BSUB:BSU06480-MONOMER"/>
<dbReference type="BioCyc" id="MetaCyc:BSU06480-MONOMER"/>
<dbReference type="UniPathway" id="UPA00074">
    <property type="reaction ID" value="UER00128"/>
</dbReference>
<dbReference type="Proteomes" id="UP000001570">
    <property type="component" value="Chromosome"/>
</dbReference>
<dbReference type="GO" id="GO:0005737">
    <property type="term" value="C:cytoplasm"/>
    <property type="evidence" value="ECO:0007669"/>
    <property type="project" value="UniProtKB-SubCell"/>
</dbReference>
<dbReference type="GO" id="GO:0005524">
    <property type="term" value="F:ATP binding"/>
    <property type="evidence" value="ECO:0000314"/>
    <property type="project" value="UniProtKB"/>
</dbReference>
<dbReference type="GO" id="GO:0004359">
    <property type="term" value="F:glutaminase activity"/>
    <property type="evidence" value="ECO:0007669"/>
    <property type="project" value="RHEA"/>
</dbReference>
<dbReference type="GO" id="GO:0000287">
    <property type="term" value="F:magnesium ion binding"/>
    <property type="evidence" value="ECO:0007669"/>
    <property type="project" value="UniProtKB-UniRule"/>
</dbReference>
<dbReference type="GO" id="GO:0004642">
    <property type="term" value="F:phosphoribosylformylglycinamidine synthase activity"/>
    <property type="evidence" value="ECO:0000314"/>
    <property type="project" value="UniProtKB"/>
</dbReference>
<dbReference type="GO" id="GO:0006189">
    <property type="term" value="P:'de novo' IMP biosynthetic process"/>
    <property type="evidence" value="ECO:0007669"/>
    <property type="project" value="UniProtKB-UniRule"/>
</dbReference>
<dbReference type="GO" id="GO:0006164">
    <property type="term" value="P:purine nucleotide biosynthetic process"/>
    <property type="evidence" value="ECO:0000314"/>
    <property type="project" value="UniProtKB"/>
</dbReference>
<dbReference type="CDD" id="cd02203">
    <property type="entry name" value="PurL_repeat1"/>
    <property type="match status" value="1"/>
</dbReference>
<dbReference type="CDD" id="cd02204">
    <property type="entry name" value="PurL_repeat2"/>
    <property type="match status" value="1"/>
</dbReference>
<dbReference type="FunFam" id="3.30.1330.10:FF:000004">
    <property type="entry name" value="Phosphoribosylformylglycinamidine synthase subunit PurL"/>
    <property type="match status" value="1"/>
</dbReference>
<dbReference type="FunFam" id="3.30.1330.10:FF:000011">
    <property type="entry name" value="Phosphoribosylformylglycinamidine synthase subunit PurL"/>
    <property type="match status" value="1"/>
</dbReference>
<dbReference type="FunFam" id="3.90.650.10:FF:000009">
    <property type="entry name" value="Phosphoribosylformylglycinamidine synthase subunit PurL"/>
    <property type="match status" value="1"/>
</dbReference>
<dbReference type="FunFam" id="3.90.650.10:FF:000013">
    <property type="entry name" value="Phosphoribosylformylglycinamidine synthase subunit PurL"/>
    <property type="match status" value="1"/>
</dbReference>
<dbReference type="Gene3D" id="3.90.650.10">
    <property type="entry name" value="PurM-like C-terminal domain"/>
    <property type="match status" value="2"/>
</dbReference>
<dbReference type="Gene3D" id="3.30.1330.10">
    <property type="entry name" value="PurM-like, N-terminal domain"/>
    <property type="match status" value="2"/>
</dbReference>
<dbReference type="HAMAP" id="MF_00420">
    <property type="entry name" value="PurL_2"/>
    <property type="match status" value="1"/>
</dbReference>
<dbReference type="InterPro" id="IPR010074">
    <property type="entry name" value="PRibForGlyAmidine_synth_PurL"/>
</dbReference>
<dbReference type="InterPro" id="IPR041609">
    <property type="entry name" value="PurL_linker"/>
</dbReference>
<dbReference type="InterPro" id="IPR010918">
    <property type="entry name" value="PurM-like_C_dom"/>
</dbReference>
<dbReference type="InterPro" id="IPR036676">
    <property type="entry name" value="PurM-like_C_sf"/>
</dbReference>
<dbReference type="InterPro" id="IPR016188">
    <property type="entry name" value="PurM-like_N"/>
</dbReference>
<dbReference type="InterPro" id="IPR036921">
    <property type="entry name" value="PurM-like_N_sf"/>
</dbReference>
<dbReference type="NCBIfam" id="TIGR01736">
    <property type="entry name" value="FGAM_synth_II"/>
    <property type="match status" value="1"/>
</dbReference>
<dbReference type="NCBIfam" id="NF002290">
    <property type="entry name" value="PRK01213.1"/>
    <property type="match status" value="1"/>
</dbReference>
<dbReference type="PANTHER" id="PTHR43555">
    <property type="entry name" value="PHOSPHORIBOSYLFORMYLGLYCINAMIDINE SYNTHASE SUBUNIT PURL"/>
    <property type="match status" value="1"/>
</dbReference>
<dbReference type="PANTHER" id="PTHR43555:SF1">
    <property type="entry name" value="PHOSPHORIBOSYLFORMYLGLYCINAMIDINE SYNTHASE SUBUNIT PURL"/>
    <property type="match status" value="1"/>
</dbReference>
<dbReference type="Pfam" id="PF00586">
    <property type="entry name" value="AIRS"/>
    <property type="match status" value="2"/>
</dbReference>
<dbReference type="Pfam" id="PF02769">
    <property type="entry name" value="AIRS_C"/>
    <property type="match status" value="2"/>
</dbReference>
<dbReference type="Pfam" id="PF18072">
    <property type="entry name" value="FGAR-AT_linker"/>
    <property type="match status" value="1"/>
</dbReference>
<dbReference type="PIRSF" id="PIRSF001587">
    <property type="entry name" value="FGAM_synthase_II"/>
    <property type="match status" value="1"/>
</dbReference>
<dbReference type="SUPFAM" id="SSF56042">
    <property type="entry name" value="PurM C-terminal domain-like"/>
    <property type="match status" value="2"/>
</dbReference>
<dbReference type="SUPFAM" id="SSF55326">
    <property type="entry name" value="PurM N-terminal domain-like"/>
    <property type="match status" value="2"/>
</dbReference>
<name>PURL_BACSU</name>
<proteinExistence type="evidence at protein level"/>
<sequence>MSLLLEPSKEQIKEEKLYQQMGVSDDEFALIESILGRLPNYTEIGIFSVMWSEHCSYKNSKPILRKFPTSGERVLQGPGEGAGIVDIGDNQAVVFKIESHNHPSALEPYQGAATGVGGIIRDVFSMGARPIAVLNSLRFGELTSPRVKYLFEEVVAGIAGYGNCIGIPTVGGEVQFDSSYEGNPLVNAMCVGLINHEDIKKGQAKGVGNTVMYVGAKTGRDGIHGATFASEEMSDSSEEKRSAVQVGDPFMEKLLLEACLEVIQCDALVGIQDMGAAGLTSSSAEMASKAGSGIEMNLDLIPQRETGMTAYEMMLSESQERMLLVIERGREQEIIDIFDKYDLEAVSVGHVTDDKMLRLTHKGEVVCELPVDALAEEAPVYHKPSQEPAYYREFLETDVPAPQIEDANEMLKALLQQPTIASKEWVYDQYDYMVRTNTVVAPGSDAGVLRIRGTKKALAMTTDCNARYLYLDPEVGGKIAVAEAARNIICSGAEPLAVTDNLNFGNPEKPEIFWQIEKAADGISEACNVLSTPVIGGNVSLYNESNGTAIYPTPVIGMVGLIEDTAHITTQHFKQAGDLVYVIGETKPEFAGSELQKMTEGRIYGKAPQIDLDVELSRQKALLDAIKKGFVQSAHDVSEGGLGVAIAESVMTTENLGANVTVEGEAALLFSESQSRFVVSVKKEHQAAFEATVKDAVHIGEVTADGILAIQNQDGQQMIHAQTKELERVWKGAIPCLLKSKA</sequence>
<reference key="1">
    <citation type="journal article" date="1987" name="J. Biol. Chem.">
        <title>Cloning and characterization of a 12-gene cluster from Bacillus subtilis encoding nine enzymes for de novo purine nucleotide synthesis.</title>
        <authorList>
            <person name="Ebbole D.J."/>
            <person name="Zalkin H."/>
        </authorList>
    </citation>
    <scope>NUCLEOTIDE SEQUENCE [GENOMIC DNA]</scope>
</reference>
<reference key="2">
    <citation type="journal article" date="1997" name="Nature">
        <title>The complete genome sequence of the Gram-positive bacterium Bacillus subtilis.</title>
        <authorList>
            <person name="Kunst F."/>
            <person name="Ogasawara N."/>
            <person name="Moszer I."/>
            <person name="Albertini A.M."/>
            <person name="Alloni G."/>
            <person name="Azevedo V."/>
            <person name="Bertero M.G."/>
            <person name="Bessieres P."/>
            <person name="Bolotin A."/>
            <person name="Borchert S."/>
            <person name="Borriss R."/>
            <person name="Boursier L."/>
            <person name="Brans A."/>
            <person name="Braun M."/>
            <person name="Brignell S.C."/>
            <person name="Bron S."/>
            <person name="Brouillet S."/>
            <person name="Bruschi C.V."/>
            <person name="Caldwell B."/>
            <person name="Capuano V."/>
            <person name="Carter N.M."/>
            <person name="Choi S.-K."/>
            <person name="Codani J.-J."/>
            <person name="Connerton I.F."/>
            <person name="Cummings N.J."/>
            <person name="Daniel R.A."/>
            <person name="Denizot F."/>
            <person name="Devine K.M."/>
            <person name="Duesterhoeft A."/>
            <person name="Ehrlich S.D."/>
            <person name="Emmerson P.T."/>
            <person name="Entian K.-D."/>
            <person name="Errington J."/>
            <person name="Fabret C."/>
            <person name="Ferrari E."/>
            <person name="Foulger D."/>
            <person name="Fritz C."/>
            <person name="Fujita M."/>
            <person name="Fujita Y."/>
            <person name="Fuma S."/>
            <person name="Galizzi A."/>
            <person name="Galleron N."/>
            <person name="Ghim S.-Y."/>
            <person name="Glaser P."/>
            <person name="Goffeau A."/>
            <person name="Golightly E.J."/>
            <person name="Grandi G."/>
            <person name="Guiseppi G."/>
            <person name="Guy B.J."/>
            <person name="Haga K."/>
            <person name="Haiech J."/>
            <person name="Harwood C.R."/>
            <person name="Henaut A."/>
            <person name="Hilbert H."/>
            <person name="Holsappel S."/>
            <person name="Hosono S."/>
            <person name="Hullo M.-F."/>
            <person name="Itaya M."/>
            <person name="Jones L.-M."/>
            <person name="Joris B."/>
            <person name="Karamata D."/>
            <person name="Kasahara Y."/>
            <person name="Klaerr-Blanchard M."/>
            <person name="Klein C."/>
            <person name="Kobayashi Y."/>
            <person name="Koetter P."/>
            <person name="Koningstein G."/>
            <person name="Krogh S."/>
            <person name="Kumano M."/>
            <person name="Kurita K."/>
            <person name="Lapidus A."/>
            <person name="Lardinois S."/>
            <person name="Lauber J."/>
            <person name="Lazarevic V."/>
            <person name="Lee S.-M."/>
            <person name="Levine A."/>
            <person name="Liu H."/>
            <person name="Masuda S."/>
            <person name="Mauel C."/>
            <person name="Medigue C."/>
            <person name="Medina N."/>
            <person name="Mellado R.P."/>
            <person name="Mizuno M."/>
            <person name="Moestl D."/>
            <person name="Nakai S."/>
            <person name="Noback M."/>
            <person name="Noone D."/>
            <person name="O'Reilly M."/>
            <person name="Ogawa K."/>
            <person name="Ogiwara A."/>
            <person name="Oudega B."/>
            <person name="Park S.-H."/>
            <person name="Parro V."/>
            <person name="Pohl T.M."/>
            <person name="Portetelle D."/>
            <person name="Porwollik S."/>
            <person name="Prescott A.M."/>
            <person name="Presecan E."/>
            <person name="Pujic P."/>
            <person name="Purnelle B."/>
            <person name="Rapoport G."/>
            <person name="Rey M."/>
            <person name="Reynolds S."/>
            <person name="Rieger M."/>
            <person name="Rivolta C."/>
            <person name="Rocha E."/>
            <person name="Roche B."/>
            <person name="Rose M."/>
            <person name="Sadaie Y."/>
            <person name="Sato T."/>
            <person name="Scanlan E."/>
            <person name="Schleich S."/>
            <person name="Schroeter R."/>
            <person name="Scoffone F."/>
            <person name="Sekiguchi J."/>
            <person name="Sekowska A."/>
            <person name="Seror S.J."/>
            <person name="Serror P."/>
            <person name="Shin B.-S."/>
            <person name="Soldo B."/>
            <person name="Sorokin A."/>
            <person name="Tacconi E."/>
            <person name="Takagi T."/>
            <person name="Takahashi H."/>
            <person name="Takemaru K."/>
            <person name="Takeuchi M."/>
            <person name="Tamakoshi A."/>
            <person name="Tanaka T."/>
            <person name="Terpstra P."/>
            <person name="Tognoni A."/>
            <person name="Tosato V."/>
            <person name="Uchiyama S."/>
            <person name="Vandenbol M."/>
            <person name="Vannier F."/>
            <person name="Vassarotti A."/>
            <person name="Viari A."/>
            <person name="Wambutt R."/>
            <person name="Wedler E."/>
            <person name="Wedler H."/>
            <person name="Weitzenegger T."/>
            <person name="Winters P."/>
            <person name="Wipat A."/>
            <person name="Yamamoto H."/>
            <person name="Yamane K."/>
            <person name="Yasumoto K."/>
            <person name="Yata K."/>
            <person name="Yoshida K."/>
            <person name="Yoshikawa H.-F."/>
            <person name="Zumstein E."/>
            <person name="Yoshikawa H."/>
            <person name="Danchin A."/>
        </authorList>
    </citation>
    <scope>NUCLEOTIDE SEQUENCE [LARGE SCALE GENOMIC DNA]</scope>
    <source>
        <strain>168</strain>
    </source>
</reference>
<reference key="3">
    <citation type="journal article" date="2004" name="Biochemistry">
        <title>The formylglycinamide ribonucleotide amidotransferase complex from Bacillus subtilis: metabolite-mediated complex formation.</title>
        <authorList>
            <person name="Hoskins A.A."/>
            <person name="Anand R."/>
            <person name="Ealick S.E."/>
            <person name="Stubbe J."/>
        </authorList>
    </citation>
    <scope>PROTEIN SEQUENCE OF N-TERMINUS</scope>
    <scope>FUNCTION</scope>
    <scope>CATALYTIC ACTIVITY</scope>
    <scope>MASS SPECTROMETRY</scope>
    <scope>BIOPHYSICOCHEMICAL PROPERTIES</scope>
    <scope>SUBUNIT</scope>
</reference>
<reference key="4">
    <citation type="journal article" date="2009" name="Microbiology">
        <title>From a consortium sequence to a unified sequence: the Bacillus subtilis 168 reference genome a decade later.</title>
        <authorList>
            <person name="Barbe V."/>
            <person name="Cruveiller S."/>
            <person name="Kunst F."/>
            <person name="Lenoble P."/>
            <person name="Meurice G."/>
            <person name="Sekowska A."/>
            <person name="Vallenet D."/>
            <person name="Wang T."/>
            <person name="Moszer I."/>
            <person name="Medigue C."/>
            <person name="Danchin A."/>
        </authorList>
    </citation>
    <scope>SEQUENCE REVISION TO 513</scope>
</reference>